<feature type="signal peptide" evidence="1">
    <location>
        <begin position="1"/>
        <end position="17"/>
    </location>
</feature>
<feature type="chain" id="PRO_0000417944" description="Serine, glycine, tyrosine and glutamine-rich protein" evidence="1">
    <location>
        <begin position="18"/>
        <end position="332"/>
    </location>
</feature>
<feature type="region of interest" description="Disordered" evidence="2">
    <location>
        <begin position="39"/>
        <end position="81"/>
    </location>
</feature>
<feature type="compositionally biased region" description="Gly residues" evidence="2">
    <location>
        <begin position="48"/>
        <end position="81"/>
    </location>
</feature>
<name>SGYQP_PINMG</name>
<protein>
    <recommendedName>
        <fullName>Serine, glycine, tyrosine and glutamine-rich protein</fullName>
    </recommendedName>
    <alternativeName>
        <fullName>Cement-like protein</fullName>
    </alternativeName>
</protein>
<sequence>MMKTVLLLVVLVGVAYCDDDGWDMGNFFQQYHQWQQQISSSSSSSSSSGGGGSSGGGASGGGGGGGSSGGGGASGGGGGGSSGGGGLTKVVLKAGGGGRGGGGIVKSVGGGGGGVTKLVAAGGASGGGSVSGGGGGGLALLAGGSAAGGGRSGVVTVSKQPIIINRQVTHVNTGGSGGGVGGGFGGGRGGFGYGLYGGHHHYNPCGYGQVYSYYYGCQSIYKQPARQVYHQPIYQPVQTVYQPVQYYQQPYQYQHSYGQASHAYQPQTTKYISYSYPQYSSQGSYPIVAGGSAGGFASARSGGFGLSSGGIGGHSSYPLSVFKHAKGEKYKL</sequence>
<proteinExistence type="evidence at protein level"/>
<keyword id="KW-0903">Direct protein sequencing</keyword>
<keyword id="KW-0964">Secreted</keyword>
<keyword id="KW-0732">Signal</keyword>
<comment type="subcellular location">
    <subcellularLocation>
        <location evidence="3">Secreted</location>
    </subcellularLocation>
</comment>
<comment type="tissue specificity">
    <text evidence="3">Prismatic layer of shell (at protein level). Expressed primarily in the mantle with highest level in the mantle edge and lower level in the mantle pallium.</text>
</comment>
<accession>H2A0L9</accession>
<organism>
    <name type="scientific">Margaritifera margaritifera</name>
    <name type="common">Freshwater pearl mussel</name>
    <dbReference type="NCBI Taxonomy" id="102329"/>
    <lineage>
        <taxon>Eukaryota</taxon>
        <taxon>Metazoa</taxon>
        <taxon>Spiralia</taxon>
        <taxon>Lophotrochozoa</taxon>
        <taxon>Mollusca</taxon>
        <taxon>Bivalvia</taxon>
        <taxon>Autobranchia</taxon>
        <taxon>Pteriomorphia</taxon>
        <taxon>Pterioida</taxon>
        <taxon>Pterioidea</taxon>
        <taxon>Pteriidae</taxon>
        <taxon>Pinctada</taxon>
    </lineage>
</organism>
<reference evidence="4" key="1">
    <citation type="journal article" date="2010" name="BMC Genomics">
        <title>Transcriptome and proteome analysis of Pinctada margaritifera calcifying mantle and shell: focus on biomineralization.</title>
        <authorList>
            <person name="Joubert C."/>
            <person name="Piquemal D."/>
            <person name="Marie B."/>
            <person name="Manchon L."/>
            <person name="Pierrat F."/>
            <person name="Zanella-Cleon I."/>
            <person name="Cochennec-Laureau N."/>
            <person name="Gueguen Y."/>
            <person name="Montagnani C."/>
        </authorList>
    </citation>
    <scope>NUCLEOTIDE SEQUENCE [MRNA]</scope>
    <scope>IDENTIFICATION</scope>
    <source>
        <tissue>Mantle</tissue>
    </source>
</reference>
<reference key="2">
    <citation type="journal article" date="2012" name="Proc. Natl. Acad. Sci. U.S.A.">
        <title>Different secretory repertoires control the biomineralization processes of prism and nacre deposition of the pearl oyster shell.</title>
        <authorList>
            <person name="Marie B."/>
            <person name="Joubert C."/>
            <person name="Tayale A."/>
            <person name="Zanella-Cleon I."/>
            <person name="Belliard C."/>
            <person name="Piquemal D."/>
            <person name="Cochennec-Laureau N."/>
            <person name="Marin F."/>
            <person name="Gueguen Y."/>
            <person name="Montagnani C."/>
        </authorList>
    </citation>
    <scope>PROTEIN SEQUENCE OF 106-150; 159-187 AND 300-322</scope>
    <scope>SUBCELLULAR LOCATION</scope>
    <scope>TISSUE SPECIFICITY</scope>
    <source>
        <tissue>Shell</tissue>
    </source>
</reference>
<dbReference type="EMBL" id="HE610386">
    <property type="protein sequence ID" value="CCE46160.1"/>
    <property type="molecule type" value="mRNA"/>
</dbReference>
<dbReference type="GO" id="GO:0005576">
    <property type="term" value="C:extracellular region"/>
    <property type="evidence" value="ECO:0007669"/>
    <property type="project" value="UniProtKB-SubCell"/>
</dbReference>
<evidence type="ECO:0000255" key="1"/>
<evidence type="ECO:0000256" key="2">
    <source>
        <dbReference type="SAM" id="MobiDB-lite"/>
    </source>
</evidence>
<evidence type="ECO:0000269" key="3">
    <source>
    </source>
</evidence>
<evidence type="ECO:0000305" key="4"/>